<name>MATN4_HUMAN</name>
<reference key="1">
    <citation type="journal article" date="1998" name="FEBS Lett.">
        <title>Genomic organisation, alternative splicing and primary structure of human matrilin-4.</title>
        <authorList>
            <person name="Wagener R."/>
            <person name="Kobbe B."/>
            <person name="Paulsson M."/>
        </authorList>
    </citation>
    <scope>NUCLEOTIDE SEQUENCE [MRNA] (ISOFORM 2)</scope>
    <scope>ALTERNATIVE SPLICING</scope>
    <source>
        <tissue>Embryonic kidney</tissue>
    </source>
</reference>
<reference key="2">
    <citation type="journal article" date="2004" name="Nat. Genet.">
        <title>Complete sequencing and characterization of 21,243 full-length human cDNAs.</title>
        <authorList>
            <person name="Ota T."/>
            <person name="Suzuki Y."/>
            <person name="Nishikawa T."/>
            <person name="Otsuki T."/>
            <person name="Sugiyama T."/>
            <person name="Irie R."/>
            <person name="Wakamatsu A."/>
            <person name="Hayashi K."/>
            <person name="Sato H."/>
            <person name="Nagai K."/>
            <person name="Kimura K."/>
            <person name="Makita H."/>
            <person name="Sekine M."/>
            <person name="Obayashi M."/>
            <person name="Nishi T."/>
            <person name="Shibahara T."/>
            <person name="Tanaka T."/>
            <person name="Ishii S."/>
            <person name="Yamamoto J."/>
            <person name="Saito K."/>
            <person name="Kawai Y."/>
            <person name="Isono Y."/>
            <person name="Nakamura Y."/>
            <person name="Nagahari K."/>
            <person name="Murakami K."/>
            <person name="Yasuda T."/>
            <person name="Iwayanagi T."/>
            <person name="Wagatsuma M."/>
            <person name="Shiratori A."/>
            <person name="Sudo H."/>
            <person name="Hosoiri T."/>
            <person name="Kaku Y."/>
            <person name="Kodaira H."/>
            <person name="Kondo H."/>
            <person name="Sugawara M."/>
            <person name="Takahashi M."/>
            <person name="Kanda K."/>
            <person name="Yokoi T."/>
            <person name="Furuya T."/>
            <person name="Kikkawa E."/>
            <person name="Omura Y."/>
            <person name="Abe K."/>
            <person name="Kamihara K."/>
            <person name="Katsuta N."/>
            <person name="Sato K."/>
            <person name="Tanikawa M."/>
            <person name="Yamazaki M."/>
            <person name="Ninomiya K."/>
            <person name="Ishibashi T."/>
            <person name="Yamashita H."/>
            <person name="Murakawa K."/>
            <person name="Fujimori K."/>
            <person name="Tanai H."/>
            <person name="Kimata M."/>
            <person name="Watanabe M."/>
            <person name="Hiraoka S."/>
            <person name="Chiba Y."/>
            <person name="Ishida S."/>
            <person name="Ono Y."/>
            <person name="Takiguchi S."/>
            <person name="Watanabe S."/>
            <person name="Yosida M."/>
            <person name="Hotuta T."/>
            <person name="Kusano J."/>
            <person name="Kanehori K."/>
            <person name="Takahashi-Fujii A."/>
            <person name="Hara H."/>
            <person name="Tanase T.-O."/>
            <person name="Nomura Y."/>
            <person name="Togiya S."/>
            <person name="Komai F."/>
            <person name="Hara R."/>
            <person name="Takeuchi K."/>
            <person name="Arita M."/>
            <person name="Imose N."/>
            <person name="Musashino K."/>
            <person name="Yuuki H."/>
            <person name="Oshima A."/>
            <person name="Sasaki N."/>
            <person name="Aotsuka S."/>
            <person name="Yoshikawa Y."/>
            <person name="Matsunawa H."/>
            <person name="Ichihara T."/>
            <person name="Shiohata N."/>
            <person name="Sano S."/>
            <person name="Moriya S."/>
            <person name="Momiyama H."/>
            <person name="Satoh N."/>
            <person name="Takami S."/>
            <person name="Terashima Y."/>
            <person name="Suzuki O."/>
            <person name="Nakagawa S."/>
            <person name="Senoh A."/>
            <person name="Mizoguchi H."/>
            <person name="Goto Y."/>
            <person name="Shimizu F."/>
            <person name="Wakebe H."/>
            <person name="Hishigaki H."/>
            <person name="Watanabe T."/>
            <person name="Sugiyama A."/>
            <person name="Takemoto M."/>
            <person name="Kawakami B."/>
            <person name="Yamazaki M."/>
            <person name="Watanabe K."/>
            <person name="Kumagai A."/>
            <person name="Itakura S."/>
            <person name="Fukuzumi Y."/>
            <person name="Fujimori Y."/>
            <person name="Komiyama M."/>
            <person name="Tashiro H."/>
            <person name="Tanigami A."/>
            <person name="Fujiwara T."/>
            <person name="Ono T."/>
            <person name="Yamada K."/>
            <person name="Fujii Y."/>
            <person name="Ozaki K."/>
            <person name="Hirao M."/>
            <person name="Ohmori Y."/>
            <person name="Kawabata A."/>
            <person name="Hikiji T."/>
            <person name="Kobatake N."/>
            <person name="Inagaki H."/>
            <person name="Ikema Y."/>
            <person name="Okamoto S."/>
            <person name="Okitani R."/>
            <person name="Kawakami T."/>
            <person name="Noguchi S."/>
            <person name="Itoh T."/>
            <person name="Shigeta K."/>
            <person name="Senba T."/>
            <person name="Matsumura K."/>
            <person name="Nakajima Y."/>
            <person name="Mizuno T."/>
            <person name="Morinaga M."/>
            <person name="Sasaki M."/>
            <person name="Togashi T."/>
            <person name="Oyama M."/>
            <person name="Hata H."/>
            <person name="Watanabe M."/>
            <person name="Komatsu T."/>
            <person name="Mizushima-Sugano J."/>
            <person name="Satoh T."/>
            <person name="Shirai Y."/>
            <person name="Takahashi Y."/>
            <person name="Nakagawa K."/>
            <person name="Okumura K."/>
            <person name="Nagase T."/>
            <person name="Nomura N."/>
            <person name="Kikuchi H."/>
            <person name="Masuho Y."/>
            <person name="Yamashita R."/>
            <person name="Nakai K."/>
            <person name="Yada T."/>
            <person name="Nakamura Y."/>
            <person name="Ohara O."/>
            <person name="Isogai T."/>
            <person name="Sugano S."/>
        </authorList>
    </citation>
    <scope>NUCLEOTIDE SEQUENCE [LARGE SCALE MRNA] (ISOFORM 4)</scope>
    <scope>VARIANT SER-164</scope>
    <source>
        <tissue>Embryo</tissue>
    </source>
</reference>
<reference key="3">
    <citation type="journal article" date="2001" name="Nature">
        <title>The DNA sequence and comparative analysis of human chromosome 20.</title>
        <authorList>
            <person name="Deloukas P."/>
            <person name="Matthews L.H."/>
            <person name="Ashurst J.L."/>
            <person name="Burton J."/>
            <person name="Gilbert J.G.R."/>
            <person name="Jones M."/>
            <person name="Stavrides G."/>
            <person name="Almeida J.P."/>
            <person name="Babbage A.K."/>
            <person name="Bagguley C.L."/>
            <person name="Bailey J."/>
            <person name="Barlow K.F."/>
            <person name="Bates K.N."/>
            <person name="Beard L.M."/>
            <person name="Beare D.M."/>
            <person name="Beasley O.P."/>
            <person name="Bird C.P."/>
            <person name="Blakey S.E."/>
            <person name="Bridgeman A.M."/>
            <person name="Brown A.J."/>
            <person name="Buck D."/>
            <person name="Burrill W.D."/>
            <person name="Butler A.P."/>
            <person name="Carder C."/>
            <person name="Carter N.P."/>
            <person name="Chapman J.C."/>
            <person name="Clamp M."/>
            <person name="Clark G."/>
            <person name="Clark L.N."/>
            <person name="Clark S.Y."/>
            <person name="Clee C.M."/>
            <person name="Clegg S."/>
            <person name="Cobley V.E."/>
            <person name="Collier R.E."/>
            <person name="Connor R.E."/>
            <person name="Corby N.R."/>
            <person name="Coulson A."/>
            <person name="Coville G.J."/>
            <person name="Deadman R."/>
            <person name="Dhami P.D."/>
            <person name="Dunn M."/>
            <person name="Ellington A.G."/>
            <person name="Frankland J.A."/>
            <person name="Fraser A."/>
            <person name="French L."/>
            <person name="Garner P."/>
            <person name="Grafham D.V."/>
            <person name="Griffiths C."/>
            <person name="Griffiths M.N.D."/>
            <person name="Gwilliam R."/>
            <person name="Hall R.E."/>
            <person name="Hammond S."/>
            <person name="Harley J.L."/>
            <person name="Heath P.D."/>
            <person name="Ho S."/>
            <person name="Holden J.L."/>
            <person name="Howden P.J."/>
            <person name="Huckle E."/>
            <person name="Hunt A.R."/>
            <person name="Hunt S.E."/>
            <person name="Jekosch K."/>
            <person name="Johnson C.M."/>
            <person name="Johnson D."/>
            <person name="Kay M.P."/>
            <person name="Kimberley A.M."/>
            <person name="King A."/>
            <person name="Knights A."/>
            <person name="Laird G.K."/>
            <person name="Lawlor S."/>
            <person name="Lehvaeslaiho M.H."/>
            <person name="Leversha M.A."/>
            <person name="Lloyd C."/>
            <person name="Lloyd D.M."/>
            <person name="Lovell J.D."/>
            <person name="Marsh V.L."/>
            <person name="Martin S.L."/>
            <person name="McConnachie L.J."/>
            <person name="McLay K."/>
            <person name="McMurray A.A."/>
            <person name="Milne S.A."/>
            <person name="Mistry D."/>
            <person name="Moore M.J.F."/>
            <person name="Mullikin J.C."/>
            <person name="Nickerson T."/>
            <person name="Oliver K."/>
            <person name="Parker A."/>
            <person name="Patel R."/>
            <person name="Pearce T.A.V."/>
            <person name="Peck A.I."/>
            <person name="Phillimore B.J.C.T."/>
            <person name="Prathalingam S.R."/>
            <person name="Plumb R.W."/>
            <person name="Ramsay H."/>
            <person name="Rice C.M."/>
            <person name="Ross M.T."/>
            <person name="Scott C.E."/>
            <person name="Sehra H.K."/>
            <person name="Shownkeen R."/>
            <person name="Sims S."/>
            <person name="Skuce C.D."/>
            <person name="Smith M.L."/>
            <person name="Soderlund C."/>
            <person name="Steward C.A."/>
            <person name="Sulston J.E."/>
            <person name="Swann R.M."/>
            <person name="Sycamore N."/>
            <person name="Taylor R."/>
            <person name="Tee L."/>
            <person name="Thomas D.W."/>
            <person name="Thorpe A."/>
            <person name="Tracey A."/>
            <person name="Tromans A.C."/>
            <person name="Vaudin M."/>
            <person name="Wall M."/>
            <person name="Wallis J.M."/>
            <person name="Whitehead S.L."/>
            <person name="Whittaker P."/>
            <person name="Willey D.L."/>
            <person name="Williams L."/>
            <person name="Williams S.A."/>
            <person name="Wilming L."/>
            <person name="Wray P.W."/>
            <person name="Hubbard T."/>
            <person name="Durbin R.M."/>
            <person name="Bentley D.R."/>
            <person name="Beck S."/>
            <person name="Rogers J."/>
        </authorList>
    </citation>
    <scope>NUCLEOTIDE SEQUENCE [LARGE SCALE GENOMIC DNA]</scope>
</reference>
<reference key="4">
    <citation type="journal article" date="2004" name="J. Biol. Chem.">
        <title>Interactions between the cartilage oligomeric matrix protein and matrilins. Implications for matrix assembly and the pathogenesis of chondrodysplasias.</title>
        <authorList>
            <person name="Mann H.H."/>
            <person name="Oezbek S."/>
            <person name="Engel J."/>
            <person name="Paulsson M."/>
            <person name="Wagener R."/>
        </authorList>
    </citation>
    <scope>INTERACTION WITH COMP</scope>
</reference>
<protein>
    <recommendedName>
        <fullName>Matrilin-4</fullName>
    </recommendedName>
</protein>
<proteinExistence type="evidence at protein level"/>
<comment type="function">
    <text>Major component of the extracellular matrix of cartilage.</text>
</comment>
<comment type="subunit">
    <text evidence="6">Interacts with COMP.</text>
</comment>
<comment type="interaction">
    <interactant intactId="EBI-12072296">
        <id>O95460-2</id>
    </interactant>
    <interactant intactId="EBI-10714818">
        <id>Q4G176</id>
        <label>ACSF3</label>
    </interactant>
    <organismsDiffer>false</organismsDiffer>
    <experiments>3</experiments>
</comment>
<comment type="interaction">
    <interactant intactId="EBI-12072296">
        <id>O95460-2</id>
    </interactant>
    <interactant intactId="EBI-744099">
        <id>Q9H0I2</id>
        <label>ENKD1</label>
    </interactant>
    <organismsDiffer>false</organismsDiffer>
    <experiments>3</experiments>
</comment>
<comment type="interaction">
    <interactant intactId="EBI-12072296">
        <id>O95460-2</id>
    </interactant>
    <interactant intactId="EBI-739467">
        <id>Q9H8Y8</id>
        <label>GORASP2</label>
    </interactant>
    <organismsDiffer>false</organismsDiffer>
    <experiments>3</experiments>
</comment>
<comment type="interaction">
    <interactant intactId="EBI-12072296">
        <id>O95460-2</id>
    </interactant>
    <interactant intactId="EBI-741158">
        <id>Q96HA8</id>
        <label>NTAQ1</label>
    </interactant>
    <organismsDiffer>false</organismsDiffer>
    <experiments>3</experiments>
</comment>
<comment type="interaction">
    <interactant intactId="EBI-12072296">
        <id>O95460-2</id>
    </interactant>
    <interactant intactId="EBI-1105153">
        <id>Q96KQ4</id>
        <label>PPP1R13B</label>
    </interactant>
    <organismsDiffer>false</organismsDiffer>
    <experiments>3</experiments>
</comment>
<comment type="interaction">
    <interactant intactId="EBI-12072296">
        <id>O95460-2</id>
    </interactant>
    <interactant intactId="EBI-727004">
        <id>O00560</id>
        <label>SDCBP</label>
    </interactant>
    <organismsDiffer>false</organismsDiffer>
    <experiments>3</experiments>
</comment>
<comment type="subcellular location">
    <subcellularLocation>
        <location>Secreted</location>
    </subcellularLocation>
</comment>
<comment type="alternative products">
    <event type="alternative splicing"/>
    <isoform>
        <id>O95460-1</id>
        <name>1</name>
        <sequence type="displayed"/>
    </isoform>
    <isoform>
        <id>O95460-2</id>
        <name>2</name>
        <sequence type="described" ref="VSP_001400"/>
    </isoform>
    <isoform>
        <id>O95460-3</id>
        <name>3</name>
        <sequence type="described" ref="VSP_015255"/>
    </isoform>
    <isoform>
        <id>O95460-4</id>
        <name>4</name>
        <sequence type="described" ref="VSP_001400 VSP_015256"/>
    </isoform>
    <text>Additional isoforms seem to exist.</text>
</comment>
<comment type="tissue specificity">
    <text>Embryonic kidney, lung and placenta.</text>
</comment>
<comment type="sequence caution" evidence="9">
    <conflict type="erroneous initiation">
        <sequence resource="EMBL-CDS" id="BAC11081"/>
    </conflict>
</comment>
<sequence length="622" mass="68487">MRGLLCWPVLLLLLQPWETQLQLTGPRCHTGPLDLVFVIDSSRSVRPFEFETMRQFLMGLLRGLNVGPNATRVGVIQYSSQVQSVFPLRAFSRREDMERAIRDLVPLAQGTMTGLAIQYAMNVAFSVAEGARPPEERVPRVAVIVTDGRPQDRVAEVAAQARARGIEIYAVGVQRADVGSLRAMASPPLDEHVFLVESFDLIQEFGLQFQSRLCGKDQCAEGGHGCQHQCVNAWAMFHCTCNPGYKLAADNKSCLAIDLCAEGTHGCEHHCVNSPGSYFCHCQVGFVLQQDQRSCRAIDYCSFGNHSCQHECVSTPGGPRCHCREGHDLQPDGRSCQVRDLCNGVDHGCEFQCVSEGLSYRCLCPEGRQLQADGKSCNRCREGHVDLVLLVDGSKSVRPQNFELVKRFVNQIVDFLDVSPEGTRVGLVQFSSRVRTEFPLGRYGTAAEVKQAVLAVEYMERGTMTGLALRHMVEHSFSEAQGARPRALNVPRVGLVFTDGRSQDDISVWAARAKEEGIVMYAVGVGKAVEAELREIASEPAELHVSYAPDFGTMTHLLENLRGSICPEEGISAGTELRSPCECESLVEFQGRTLGALESLTLNLAQLTARLEDLENQLANQK</sequence>
<gene>
    <name type="primary">MATN4</name>
</gene>
<evidence type="ECO:0000250" key="1"/>
<evidence type="ECO:0000255" key="2"/>
<evidence type="ECO:0000255" key="3">
    <source>
        <dbReference type="PROSITE-ProRule" id="PRU00076"/>
    </source>
</evidence>
<evidence type="ECO:0000255" key="4">
    <source>
        <dbReference type="PROSITE-ProRule" id="PRU00219"/>
    </source>
</evidence>
<evidence type="ECO:0000269" key="5">
    <source>
    </source>
</evidence>
<evidence type="ECO:0000269" key="6">
    <source>
    </source>
</evidence>
<evidence type="ECO:0000303" key="7">
    <source>
    </source>
</evidence>
<evidence type="ECO:0000303" key="8">
    <source>
    </source>
</evidence>
<evidence type="ECO:0000305" key="9"/>
<dbReference type="EMBL" id="AJ007581">
    <property type="protein sequence ID" value="CAA07569.1"/>
    <property type="molecule type" value="mRNA"/>
</dbReference>
<dbReference type="EMBL" id="AK074595">
    <property type="protein sequence ID" value="BAC11081.1"/>
    <property type="status" value="ALT_INIT"/>
    <property type="molecule type" value="mRNA"/>
</dbReference>
<dbReference type="EMBL" id="AK074597">
    <property type="protein sequence ID" value="BAC11083.1"/>
    <property type="molecule type" value="mRNA"/>
</dbReference>
<dbReference type="EMBL" id="AL021578">
    <property type="status" value="NOT_ANNOTATED_CDS"/>
    <property type="molecule type" value="Genomic_DNA"/>
</dbReference>
<dbReference type="CCDS" id="CCDS13348.1">
    <molecule id="O95460-2"/>
</dbReference>
<dbReference type="CCDS" id="CCDS46607.1">
    <molecule id="O95460-4"/>
</dbReference>
<dbReference type="RefSeq" id="NP_001380459.1">
    <molecule id="O95460-2"/>
    <property type="nucleotide sequence ID" value="NM_001393530.1"/>
</dbReference>
<dbReference type="RefSeq" id="NP_085080.1">
    <molecule id="O95460-4"/>
    <property type="nucleotide sequence ID" value="NM_030590.4"/>
</dbReference>
<dbReference type="RefSeq" id="NP_085095.1">
    <property type="nucleotide sequence ID" value="NM_030592.3"/>
</dbReference>
<dbReference type="RefSeq" id="XP_005260654.1">
    <property type="nucleotide sequence ID" value="XM_005260597.1"/>
</dbReference>
<dbReference type="SMR" id="O95460"/>
<dbReference type="BioGRID" id="114313">
    <property type="interactions" value="36"/>
</dbReference>
<dbReference type="ComplexPortal" id="CPX-4641">
    <property type="entry name" value="Matrilin-4 complex"/>
</dbReference>
<dbReference type="FunCoup" id="O95460">
    <property type="interactions" value="67"/>
</dbReference>
<dbReference type="IntAct" id="O95460">
    <property type="interactions" value="19"/>
</dbReference>
<dbReference type="STRING" id="9606.ENSP00000361842"/>
<dbReference type="GlyConnect" id="1493">
    <property type="glycosylation" value="6 N-Linked glycans (1 site)"/>
</dbReference>
<dbReference type="GlyCosmos" id="O95460">
    <property type="glycosylation" value="3 sites, 6 glycans"/>
</dbReference>
<dbReference type="GlyGen" id="O95460">
    <property type="glycosylation" value="3 sites, 6 N-linked glycans (1 site)"/>
</dbReference>
<dbReference type="iPTMnet" id="O95460"/>
<dbReference type="PhosphoSitePlus" id="O95460"/>
<dbReference type="BioMuta" id="MATN4"/>
<dbReference type="MassIVE" id="O95460"/>
<dbReference type="PeptideAtlas" id="O95460"/>
<dbReference type="ProteomicsDB" id="50892">
    <molecule id="O95460-1"/>
</dbReference>
<dbReference type="ProteomicsDB" id="50893">
    <molecule id="O95460-2"/>
</dbReference>
<dbReference type="ProteomicsDB" id="50894">
    <molecule id="O95460-3"/>
</dbReference>
<dbReference type="ProteomicsDB" id="50895">
    <molecule id="O95460-4"/>
</dbReference>
<dbReference type="Antibodypedia" id="27542">
    <property type="antibodies" value="117 antibodies from 28 providers"/>
</dbReference>
<dbReference type="DNASU" id="8785"/>
<dbReference type="Ensembl" id="ENST00000360607.10">
    <molecule id="O95460-4"/>
    <property type="protein sequence ID" value="ENSP00000353819.5"/>
    <property type="gene ID" value="ENSG00000124159.17"/>
</dbReference>
<dbReference type="Ensembl" id="ENST00000372754.5">
    <molecule id="O95460-1"/>
    <property type="protein sequence ID" value="ENSP00000361840.1"/>
    <property type="gene ID" value="ENSG00000124159.17"/>
</dbReference>
<dbReference type="Ensembl" id="ENST00000372756.6">
    <molecule id="O95460-2"/>
    <property type="protein sequence ID" value="ENSP00000361842.1"/>
    <property type="gene ID" value="ENSG00000124159.17"/>
</dbReference>
<dbReference type="Ensembl" id="ENST00000537548.3">
    <molecule id="O95460-2"/>
    <property type="protein sequence ID" value="ENSP00000440328.1"/>
    <property type="gene ID" value="ENSG00000124159.17"/>
</dbReference>
<dbReference type="GeneID" id="8785"/>
<dbReference type="KEGG" id="hsa:8785"/>
<dbReference type="MANE-Select" id="ENST00000372756.6">
    <molecule id="O95460-2"/>
    <property type="protein sequence ID" value="ENSP00000361842.1"/>
    <property type="RefSeq nucleotide sequence ID" value="NM_001393530.1"/>
    <property type="RefSeq protein sequence ID" value="NP_001380459.1"/>
</dbReference>
<dbReference type="UCSC" id="uc002xno.4">
    <molecule id="O95460-1"/>
    <property type="organism name" value="human"/>
</dbReference>
<dbReference type="AGR" id="HGNC:6910"/>
<dbReference type="CTD" id="8785"/>
<dbReference type="DisGeNET" id="8785"/>
<dbReference type="GeneCards" id="MATN4"/>
<dbReference type="HGNC" id="HGNC:6910">
    <property type="gene designation" value="MATN4"/>
</dbReference>
<dbReference type="HPA" id="ENSG00000124159">
    <property type="expression patterns" value="Tissue enriched (pancreas)"/>
</dbReference>
<dbReference type="MalaCards" id="MATN4"/>
<dbReference type="MIM" id="603897">
    <property type="type" value="gene"/>
</dbReference>
<dbReference type="neXtProt" id="NX_O95460"/>
<dbReference type="OpenTargets" id="ENSG00000124159"/>
<dbReference type="PharmGKB" id="PA30653"/>
<dbReference type="VEuPathDB" id="HostDB:ENSG00000124159"/>
<dbReference type="eggNOG" id="KOG1217">
    <property type="taxonomic scope" value="Eukaryota"/>
</dbReference>
<dbReference type="GeneTree" id="ENSGT00940000157086"/>
<dbReference type="InParanoid" id="O95460"/>
<dbReference type="OMA" id="RSCSMID"/>
<dbReference type="OrthoDB" id="6022609at2759"/>
<dbReference type="PAN-GO" id="O95460">
    <property type="GO annotations" value="1 GO annotation based on evolutionary models"/>
</dbReference>
<dbReference type="PhylomeDB" id="O95460"/>
<dbReference type="TreeFam" id="TF330078"/>
<dbReference type="PathwayCommons" id="O95460"/>
<dbReference type="Reactome" id="R-HSA-3000178">
    <property type="pathway name" value="ECM proteoglycans"/>
</dbReference>
<dbReference type="SignaLink" id="O95460"/>
<dbReference type="BioGRID-ORCS" id="8785">
    <property type="hits" value="12 hits in 1144 CRISPR screens"/>
</dbReference>
<dbReference type="GenomeRNAi" id="8785"/>
<dbReference type="Pharos" id="O95460">
    <property type="development level" value="Tdark"/>
</dbReference>
<dbReference type="PRO" id="PR:O95460"/>
<dbReference type="Proteomes" id="UP000005640">
    <property type="component" value="Chromosome 20"/>
</dbReference>
<dbReference type="RNAct" id="O95460">
    <property type="molecule type" value="protein"/>
</dbReference>
<dbReference type="Bgee" id="ENSG00000124159">
    <property type="expression patterns" value="Expressed in cartilage tissue and 70 other cell types or tissues"/>
</dbReference>
<dbReference type="ExpressionAtlas" id="O95460">
    <property type="expression patterns" value="baseline and differential"/>
</dbReference>
<dbReference type="GO" id="GO:0062023">
    <property type="term" value="C:collagen-containing extracellular matrix"/>
    <property type="evidence" value="ECO:0000318"/>
    <property type="project" value="GO_Central"/>
</dbReference>
<dbReference type="GO" id="GO:0005576">
    <property type="term" value="C:extracellular region"/>
    <property type="evidence" value="ECO:0000304"/>
    <property type="project" value="Reactome"/>
</dbReference>
<dbReference type="GO" id="GO:0120216">
    <property type="term" value="C:matrilin complex"/>
    <property type="evidence" value="ECO:0000266"/>
    <property type="project" value="ComplexPortal"/>
</dbReference>
<dbReference type="GO" id="GO:0005509">
    <property type="term" value="F:calcium ion binding"/>
    <property type="evidence" value="ECO:0007669"/>
    <property type="project" value="InterPro"/>
</dbReference>
<dbReference type="GO" id="GO:0030198">
    <property type="term" value="P:extracellular matrix organization"/>
    <property type="evidence" value="ECO:0000303"/>
    <property type="project" value="ComplexPortal"/>
</dbReference>
<dbReference type="CDD" id="cd00054">
    <property type="entry name" value="EGF_CA"/>
    <property type="match status" value="1"/>
</dbReference>
<dbReference type="FunFam" id="3.40.50.410:FF:000004">
    <property type="entry name" value="collagen alpha-6(VI) chain"/>
    <property type="match status" value="2"/>
</dbReference>
<dbReference type="FunFam" id="2.10.25.10:FF:000227">
    <property type="entry name" value="Matrilin 4"/>
    <property type="match status" value="1"/>
</dbReference>
<dbReference type="FunFam" id="2.10.25.10:FF:000041">
    <property type="entry name" value="matrilin-2 isoform X1"/>
    <property type="match status" value="2"/>
</dbReference>
<dbReference type="FunFam" id="1.20.5.30:FF:000002">
    <property type="entry name" value="matrilin-4 isoform X1"/>
    <property type="match status" value="1"/>
</dbReference>
<dbReference type="FunFam" id="2.10.25.10:FF:000386">
    <property type="entry name" value="matrilin-4 isoform X1"/>
    <property type="match status" value="1"/>
</dbReference>
<dbReference type="Gene3D" id="1.20.5.30">
    <property type="match status" value="1"/>
</dbReference>
<dbReference type="Gene3D" id="2.10.25.10">
    <property type="entry name" value="Laminin"/>
    <property type="match status" value="4"/>
</dbReference>
<dbReference type="Gene3D" id="3.40.50.410">
    <property type="entry name" value="von Willebrand factor, type A domain"/>
    <property type="match status" value="2"/>
</dbReference>
<dbReference type="InterPro" id="IPR026823">
    <property type="entry name" value="cEGF"/>
</dbReference>
<dbReference type="InterPro" id="IPR050525">
    <property type="entry name" value="ECM_Assembly_Org"/>
</dbReference>
<dbReference type="InterPro" id="IPR001881">
    <property type="entry name" value="EGF-like_Ca-bd_dom"/>
</dbReference>
<dbReference type="InterPro" id="IPR000742">
    <property type="entry name" value="EGF-like_dom"/>
</dbReference>
<dbReference type="InterPro" id="IPR009030">
    <property type="entry name" value="Growth_fac_rcpt_cys_sf"/>
</dbReference>
<dbReference type="InterPro" id="IPR036337">
    <property type="entry name" value="Matrilin_cc_sf"/>
</dbReference>
<dbReference type="InterPro" id="IPR019466">
    <property type="entry name" value="Matrilin_coiled-coil_trimer"/>
</dbReference>
<dbReference type="InterPro" id="IPR002035">
    <property type="entry name" value="VWF_A"/>
</dbReference>
<dbReference type="InterPro" id="IPR036465">
    <property type="entry name" value="vWFA_dom_sf"/>
</dbReference>
<dbReference type="PANTHER" id="PTHR24020">
    <property type="entry name" value="COLLAGEN ALPHA"/>
    <property type="match status" value="1"/>
</dbReference>
<dbReference type="PANTHER" id="PTHR24020:SF14">
    <property type="entry name" value="MATRILIN-4"/>
    <property type="match status" value="1"/>
</dbReference>
<dbReference type="Pfam" id="PF12662">
    <property type="entry name" value="cEGF"/>
    <property type="match status" value="1"/>
</dbReference>
<dbReference type="Pfam" id="PF14670">
    <property type="entry name" value="FXa_inhibition"/>
    <property type="match status" value="2"/>
</dbReference>
<dbReference type="Pfam" id="PF10393">
    <property type="entry name" value="Matrilin_ccoil"/>
    <property type="match status" value="1"/>
</dbReference>
<dbReference type="Pfam" id="PF00092">
    <property type="entry name" value="VWA"/>
    <property type="match status" value="2"/>
</dbReference>
<dbReference type="PRINTS" id="PR00453">
    <property type="entry name" value="VWFADOMAIN"/>
</dbReference>
<dbReference type="SMART" id="SM00181">
    <property type="entry name" value="EGF"/>
    <property type="match status" value="4"/>
</dbReference>
<dbReference type="SMART" id="SM00179">
    <property type="entry name" value="EGF_CA"/>
    <property type="match status" value="4"/>
</dbReference>
<dbReference type="SMART" id="SM01279">
    <property type="entry name" value="Matrilin_ccoil"/>
    <property type="match status" value="1"/>
</dbReference>
<dbReference type="SMART" id="SM00327">
    <property type="entry name" value="VWA"/>
    <property type="match status" value="2"/>
</dbReference>
<dbReference type="SUPFAM" id="SSF58002">
    <property type="entry name" value="Chicken cartilage matrix protein"/>
    <property type="match status" value="1"/>
</dbReference>
<dbReference type="SUPFAM" id="SSF57184">
    <property type="entry name" value="Growth factor receptor domain"/>
    <property type="match status" value="1"/>
</dbReference>
<dbReference type="SUPFAM" id="SSF53300">
    <property type="entry name" value="vWA-like"/>
    <property type="match status" value="2"/>
</dbReference>
<dbReference type="PROSITE" id="PS00010">
    <property type="entry name" value="ASX_HYDROXYL"/>
    <property type="match status" value="2"/>
</dbReference>
<dbReference type="PROSITE" id="PS01186">
    <property type="entry name" value="EGF_2"/>
    <property type="match status" value="2"/>
</dbReference>
<dbReference type="PROSITE" id="PS50026">
    <property type="entry name" value="EGF_3"/>
    <property type="match status" value="3"/>
</dbReference>
<dbReference type="PROSITE" id="PS50234">
    <property type="entry name" value="VWFA"/>
    <property type="match status" value="2"/>
</dbReference>
<accession>O95460</accession>
<accession>A6NH94</accession>
<accession>A6NKN5</accession>
<accession>Q5QPU2</accession>
<accession>Q5QPU3</accession>
<accession>Q5QPU4</accession>
<accession>Q8N2M5</accession>
<accession>Q8N2M7</accession>
<accession>Q9H1F8</accession>
<accession>Q9H1F9</accession>
<feature type="signal peptide" evidence="1">
    <location>
        <begin position="1"/>
        <end position="18"/>
    </location>
</feature>
<feature type="chain" id="PRO_0000007660" description="Matrilin-4">
    <location>
        <begin position="19"/>
        <end position="622"/>
    </location>
</feature>
<feature type="domain" description="VWFA 1" evidence="4">
    <location>
        <begin position="34"/>
        <end position="213"/>
    </location>
</feature>
<feature type="domain" description="EGF-like 1; incomplete" evidence="3">
    <location>
        <begin position="215"/>
        <end position="255"/>
    </location>
</feature>
<feature type="domain" description="EGF-like 2" evidence="3">
    <location>
        <begin position="256"/>
        <end position="292"/>
    </location>
</feature>
<feature type="domain" description="EGF-like 3" evidence="3">
    <location>
        <begin position="297"/>
        <end position="337"/>
    </location>
</feature>
<feature type="domain" description="EGF-like 4" evidence="3">
    <location>
        <begin position="342"/>
        <end position="377"/>
    </location>
</feature>
<feature type="domain" description="VWFA 2" evidence="4">
    <location>
        <begin position="386"/>
        <end position="561"/>
    </location>
</feature>
<feature type="coiled-coil region" evidence="2">
    <location>
        <begin position="591"/>
        <end position="622"/>
    </location>
</feature>
<feature type="glycosylation site" description="N-linked (GlcNAc...) asparagine" evidence="2">
    <location>
        <position position="69"/>
    </location>
</feature>
<feature type="glycosylation site" description="N-linked (GlcNAc...) asparagine" evidence="2">
    <location>
        <position position="251"/>
    </location>
</feature>
<feature type="glycosylation site" description="N-linked (GlcNAc...) asparagine" evidence="2">
    <location>
        <position position="305"/>
    </location>
</feature>
<feature type="disulfide bond" evidence="3">
    <location>
        <begin position="219"/>
        <end position="230"/>
    </location>
</feature>
<feature type="disulfide bond" evidence="3">
    <location>
        <begin position="226"/>
        <end position="239"/>
    </location>
</feature>
<feature type="disulfide bond" evidence="3">
    <location>
        <begin position="241"/>
        <end position="254"/>
    </location>
</feature>
<feature type="disulfide bond" evidence="3">
    <location>
        <begin position="260"/>
        <end position="271"/>
    </location>
</feature>
<feature type="disulfide bond" evidence="3">
    <location>
        <begin position="267"/>
        <end position="280"/>
    </location>
</feature>
<feature type="disulfide bond" evidence="3">
    <location>
        <begin position="282"/>
        <end position="295"/>
    </location>
</feature>
<feature type="disulfide bond" evidence="3">
    <location>
        <begin position="301"/>
        <end position="312"/>
    </location>
</feature>
<feature type="disulfide bond" evidence="3">
    <location>
        <begin position="308"/>
        <end position="321"/>
    </location>
</feature>
<feature type="disulfide bond" evidence="3">
    <location>
        <begin position="323"/>
        <end position="336"/>
    </location>
</feature>
<feature type="disulfide bond" evidence="3">
    <location>
        <begin position="342"/>
        <end position="353"/>
    </location>
</feature>
<feature type="disulfide bond" evidence="3">
    <location>
        <begin position="349"/>
        <end position="362"/>
    </location>
</feature>
<feature type="disulfide bond" evidence="3">
    <location>
        <begin position="364"/>
        <end position="377"/>
    </location>
</feature>
<feature type="splice variant" id="VSP_015255" description="In isoform 3." evidence="9">
    <location>
        <begin position="25"/>
        <end position="214"/>
    </location>
</feature>
<feature type="splice variant" id="VSP_001400" description="In isoform 2 and isoform 4." evidence="7 8">
    <location>
        <begin position="215"/>
        <end position="255"/>
    </location>
</feature>
<feature type="splice variant" id="VSP_015256" description="In isoform 4." evidence="7">
    <location>
        <begin position="256"/>
        <end position="296"/>
    </location>
</feature>
<feature type="sequence variant" id="VAR_055758" description="In dbSNP:rs2743307.">
    <original>L</original>
    <variation>F</variation>
    <location>
        <position position="13"/>
    </location>
</feature>
<feature type="sequence variant" id="VAR_055759" description="In dbSNP:rs2072788." evidence="5">
    <original>R</original>
    <variation>S</variation>
    <location>
        <position position="164"/>
    </location>
</feature>
<feature type="sequence conflict" description="In Ref. 2; BAC11083." evidence="9" ref="2">
    <original>V</original>
    <variation>L</variation>
    <location>
        <position position="173"/>
    </location>
</feature>
<feature type="sequence conflict" description="In Ref. 2; BAC11083." evidence="9" ref="2">
    <original>G</original>
    <variation>S</variation>
    <location>
        <position position="563"/>
    </location>
</feature>
<organism>
    <name type="scientific">Homo sapiens</name>
    <name type="common">Human</name>
    <dbReference type="NCBI Taxonomy" id="9606"/>
    <lineage>
        <taxon>Eukaryota</taxon>
        <taxon>Metazoa</taxon>
        <taxon>Chordata</taxon>
        <taxon>Craniata</taxon>
        <taxon>Vertebrata</taxon>
        <taxon>Euteleostomi</taxon>
        <taxon>Mammalia</taxon>
        <taxon>Eutheria</taxon>
        <taxon>Euarchontoglires</taxon>
        <taxon>Primates</taxon>
        <taxon>Haplorrhini</taxon>
        <taxon>Catarrhini</taxon>
        <taxon>Hominidae</taxon>
        <taxon>Homo</taxon>
    </lineage>
</organism>
<keyword id="KW-0025">Alternative splicing</keyword>
<keyword id="KW-0175">Coiled coil</keyword>
<keyword id="KW-1015">Disulfide bond</keyword>
<keyword id="KW-0245">EGF-like domain</keyword>
<keyword id="KW-0325">Glycoprotein</keyword>
<keyword id="KW-1267">Proteomics identification</keyword>
<keyword id="KW-1185">Reference proteome</keyword>
<keyword id="KW-0677">Repeat</keyword>
<keyword id="KW-0964">Secreted</keyword>
<keyword id="KW-0732">Signal</keyword>